<gene>
    <name evidence="1" type="primary">nuoH</name>
    <name type="ordered locus">Rmag_0244</name>
</gene>
<protein>
    <recommendedName>
        <fullName evidence="1">NADH-quinone oxidoreductase subunit H</fullName>
        <ecNumber evidence="1">7.1.1.-</ecNumber>
    </recommendedName>
    <alternativeName>
        <fullName evidence="1">NADH dehydrogenase I subunit H</fullName>
    </alternativeName>
    <alternativeName>
        <fullName evidence="1">NDH-1 subunit H</fullName>
    </alternativeName>
</protein>
<keyword id="KW-0997">Cell inner membrane</keyword>
<keyword id="KW-1003">Cell membrane</keyword>
<keyword id="KW-0472">Membrane</keyword>
<keyword id="KW-0520">NAD</keyword>
<keyword id="KW-0874">Quinone</keyword>
<keyword id="KW-1278">Translocase</keyword>
<keyword id="KW-0812">Transmembrane</keyword>
<keyword id="KW-1133">Transmembrane helix</keyword>
<keyword id="KW-0830">Ubiquinone</keyword>
<sequence length="357" mass="40323">MELWQAFVQMVYTLTPWFDGTIASILIILIKAITLVIPLMLVVAYFTYAERKVIGYMQLRIGPNRVGPKGWLQPIADALKLMTKEIIFPTKANIYLFLLAPVLAIAPAIAVWVVIPFDEDIYITNLDISLLYVLAIGSIGVYGIILAGWASNSKYPLLGALRSASLLVSYEIVIGFALATVVMIAGSVNLNTIVQAQQGGIIYWNFIPLFPMMIIFFISALIETNRAPFDVVEGESEIVGGTHVEYSGMTFAVFFLAEYANMILMAVLAVVMFFGGWHSPFEAIPYLESAFSWVPGIIWLLAKTTFFMFLYLWVRATFPRFRYDQIMRLSWKVFLPITIIWIFVVALMTQLKLEPWF</sequence>
<comment type="function">
    <text evidence="1">NDH-1 shuttles electrons from NADH, via FMN and iron-sulfur (Fe-S) centers, to quinones in the respiratory chain. The immediate electron acceptor for the enzyme in this species is believed to be ubiquinone. Couples the redox reaction to proton translocation (for every two electrons transferred, four hydrogen ions are translocated across the cytoplasmic membrane), and thus conserves the redox energy in a proton gradient. This subunit may bind ubiquinone.</text>
</comment>
<comment type="catalytic activity">
    <reaction evidence="1">
        <text>a quinone + NADH + 5 H(+)(in) = a quinol + NAD(+) + 4 H(+)(out)</text>
        <dbReference type="Rhea" id="RHEA:57888"/>
        <dbReference type="ChEBI" id="CHEBI:15378"/>
        <dbReference type="ChEBI" id="CHEBI:24646"/>
        <dbReference type="ChEBI" id="CHEBI:57540"/>
        <dbReference type="ChEBI" id="CHEBI:57945"/>
        <dbReference type="ChEBI" id="CHEBI:132124"/>
    </reaction>
</comment>
<comment type="subunit">
    <text evidence="1">NDH-1 is composed of 14 different subunits. Subunits NuoA, H, J, K, L, M, N constitute the membrane sector of the complex.</text>
</comment>
<comment type="subcellular location">
    <subcellularLocation>
        <location evidence="1">Cell inner membrane</location>
        <topology evidence="1">Multi-pass membrane protein</topology>
    </subcellularLocation>
</comment>
<comment type="similarity">
    <text evidence="1">Belongs to the complex I subunit 1 family.</text>
</comment>
<proteinExistence type="inferred from homology"/>
<dbReference type="EC" id="7.1.1.-" evidence="1"/>
<dbReference type="EMBL" id="CP000488">
    <property type="protein sequence ID" value="ABL02026.1"/>
    <property type="molecule type" value="Genomic_DNA"/>
</dbReference>
<dbReference type="RefSeq" id="WP_011737651.1">
    <property type="nucleotide sequence ID" value="NC_008610.1"/>
</dbReference>
<dbReference type="SMR" id="A1AVR9"/>
<dbReference type="STRING" id="413404.Rmag_0244"/>
<dbReference type="KEGG" id="rma:Rmag_0244"/>
<dbReference type="eggNOG" id="COG1005">
    <property type="taxonomic scope" value="Bacteria"/>
</dbReference>
<dbReference type="HOGENOM" id="CLU_015134_0_1_6"/>
<dbReference type="OrthoDB" id="9803734at2"/>
<dbReference type="Proteomes" id="UP000002587">
    <property type="component" value="Chromosome"/>
</dbReference>
<dbReference type="GO" id="GO:0005886">
    <property type="term" value="C:plasma membrane"/>
    <property type="evidence" value="ECO:0007669"/>
    <property type="project" value="UniProtKB-SubCell"/>
</dbReference>
<dbReference type="GO" id="GO:0003954">
    <property type="term" value="F:NADH dehydrogenase activity"/>
    <property type="evidence" value="ECO:0007669"/>
    <property type="project" value="TreeGrafter"/>
</dbReference>
<dbReference type="GO" id="GO:0016655">
    <property type="term" value="F:oxidoreductase activity, acting on NAD(P)H, quinone or similar compound as acceptor"/>
    <property type="evidence" value="ECO:0007669"/>
    <property type="project" value="UniProtKB-UniRule"/>
</dbReference>
<dbReference type="GO" id="GO:0048038">
    <property type="term" value="F:quinone binding"/>
    <property type="evidence" value="ECO:0007669"/>
    <property type="project" value="UniProtKB-KW"/>
</dbReference>
<dbReference type="GO" id="GO:0009060">
    <property type="term" value="P:aerobic respiration"/>
    <property type="evidence" value="ECO:0007669"/>
    <property type="project" value="TreeGrafter"/>
</dbReference>
<dbReference type="HAMAP" id="MF_01350">
    <property type="entry name" value="NDH1_NuoH"/>
    <property type="match status" value="1"/>
</dbReference>
<dbReference type="InterPro" id="IPR001694">
    <property type="entry name" value="NADH_UbQ_OxRdtase_su1/FPO"/>
</dbReference>
<dbReference type="InterPro" id="IPR018086">
    <property type="entry name" value="NADH_UbQ_OxRdtase_su1_CS"/>
</dbReference>
<dbReference type="NCBIfam" id="NF004741">
    <property type="entry name" value="PRK06076.1-2"/>
    <property type="match status" value="1"/>
</dbReference>
<dbReference type="PANTHER" id="PTHR11432">
    <property type="entry name" value="NADH DEHYDROGENASE SUBUNIT 1"/>
    <property type="match status" value="1"/>
</dbReference>
<dbReference type="PANTHER" id="PTHR11432:SF3">
    <property type="entry name" value="NADH-UBIQUINONE OXIDOREDUCTASE CHAIN 1"/>
    <property type="match status" value="1"/>
</dbReference>
<dbReference type="Pfam" id="PF00146">
    <property type="entry name" value="NADHdh"/>
    <property type="match status" value="1"/>
</dbReference>
<dbReference type="PROSITE" id="PS00668">
    <property type="entry name" value="COMPLEX1_ND1_2"/>
    <property type="match status" value="1"/>
</dbReference>
<feature type="chain" id="PRO_0000298849" description="NADH-quinone oxidoreductase subunit H">
    <location>
        <begin position="1"/>
        <end position="357"/>
    </location>
</feature>
<feature type="transmembrane region" description="Helical" evidence="1">
    <location>
        <begin position="25"/>
        <end position="45"/>
    </location>
</feature>
<feature type="transmembrane region" description="Helical" evidence="1">
    <location>
        <begin position="94"/>
        <end position="114"/>
    </location>
</feature>
<feature type="transmembrane region" description="Helical" evidence="1">
    <location>
        <begin position="130"/>
        <end position="150"/>
    </location>
</feature>
<feature type="transmembrane region" description="Helical" evidence="1">
    <location>
        <begin position="166"/>
        <end position="186"/>
    </location>
</feature>
<feature type="transmembrane region" description="Helical" evidence="1">
    <location>
        <begin position="201"/>
        <end position="221"/>
    </location>
</feature>
<feature type="transmembrane region" description="Helical" evidence="1">
    <location>
        <begin position="254"/>
        <end position="274"/>
    </location>
</feature>
<feature type="transmembrane region" description="Helical" evidence="1">
    <location>
        <begin position="294"/>
        <end position="314"/>
    </location>
</feature>
<feature type="transmembrane region" description="Helical" evidence="1">
    <location>
        <begin position="329"/>
        <end position="349"/>
    </location>
</feature>
<reference key="1">
    <citation type="journal article" date="2007" name="Science">
        <title>The Calyptogena magnifica chemoautotrophic symbiont genome.</title>
        <authorList>
            <person name="Newton I.L.G."/>
            <person name="Woyke T."/>
            <person name="Auchtung T.A."/>
            <person name="Dilly G.F."/>
            <person name="Dutton R.J."/>
            <person name="Fisher M.C."/>
            <person name="Fontanez K.M."/>
            <person name="Lau E."/>
            <person name="Stewart F.J."/>
            <person name="Richardson P.M."/>
            <person name="Barry K.W."/>
            <person name="Saunders E."/>
            <person name="Detter J.C."/>
            <person name="Wu D."/>
            <person name="Eisen J.A."/>
            <person name="Cavanaugh C.M."/>
        </authorList>
    </citation>
    <scope>NUCLEOTIDE SEQUENCE [LARGE SCALE GENOMIC DNA]</scope>
</reference>
<evidence type="ECO:0000255" key="1">
    <source>
        <dbReference type="HAMAP-Rule" id="MF_01350"/>
    </source>
</evidence>
<accession>A1AVR9</accession>
<name>NUOH_RUTMC</name>
<organism>
    <name type="scientific">Ruthia magnifica subsp. Calyptogena magnifica</name>
    <dbReference type="NCBI Taxonomy" id="413404"/>
    <lineage>
        <taxon>Bacteria</taxon>
        <taxon>Pseudomonadati</taxon>
        <taxon>Pseudomonadota</taxon>
        <taxon>Gammaproteobacteria</taxon>
        <taxon>Candidatus Pseudothioglobaceae</taxon>
        <taxon>Candidatus Ruthturnera</taxon>
    </lineage>
</organism>